<accession>P62482</accession>
<accession>P97381</accession>
<accession>Q60942</accession>
<accession>Q64284</accession>
<name>KCAB2_MOUSE</name>
<protein>
    <recommendedName>
        <fullName>Voltage-gated potassium channel subunit beta-2</fullName>
        <ecNumber evidence="1">1.1.1.-</ecNumber>
    </recommendedName>
    <alternativeName>
        <fullName>K(+) channel subunit beta-2</fullName>
    </alternativeName>
    <alternativeName>
        <fullName>Kv-beta-2</fullName>
    </alternativeName>
    <alternativeName>
        <fullName>Neuroimmune protein F5</fullName>
    </alternativeName>
</protein>
<feature type="chain" id="PRO_0000148747" description="Voltage-gated potassium channel subunit beta-2">
    <location>
        <begin position="1"/>
        <end position="367"/>
    </location>
</feature>
<feature type="active site" description="Proton donor/acceptor" evidence="1">
    <location>
        <position position="90"/>
    </location>
</feature>
<feature type="binding site" evidence="1">
    <location>
        <position position="56"/>
    </location>
    <ligand>
        <name>NADP(+)</name>
        <dbReference type="ChEBI" id="CHEBI:58349"/>
    </ligand>
</feature>
<feature type="binding site" evidence="1">
    <location>
        <position position="57"/>
    </location>
    <ligand>
        <name>NADP(+)</name>
        <dbReference type="ChEBI" id="CHEBI:58349"/>
    </ligand>
</feature>
<feature type="binding site" evidence="1">
    <location>
        <position position="63"/>
    </location>
    <ligand>
        <name>NADP(+)</name>
        <dbReference type="ChEBI" id="CHEBI:58349"/>
    </ligand>
</feature>
<feature type="binding site" evidence="1">
    <location>
        <position position="85"/>
    </location>
    <ligand>
        <name>NADP(+)</name>
        <dbReference type="ChEBI" id="CHEBI:58349"/>
    </ligand>
</feature>
<feature type="binding site" evidence="1">
    <location>
        <position position="158"/>
    </location>
    <ligand>
        <name>NADP(+)</name>
        <dbReference type="ChEBI" id="CHEBI:58349"/>
    </ligand>
</feature>
<feature type="binding site" evidence="1">
    <location>
        <position position="188"/>
    </location>
    <ligand>
        <name>NADP(+)</name>
        <dbReference type="ChEBI" id="CHEBI:58349"/>
    </ligand>
</feature>
<feature type="binding site" evidence="1">
    <location>
        <position position="189"/>
    </location>
    <ligand>
        <name>NADP(+)</name>
        <dbReference type="ChEBI" id="CHEBI:58349"/>
    </ligand>
</feature>
<feature type="binding site" evidence="1">
    <location>
        <position position="214"/>
    </location>
    <ligand>
        <name>NADP(+)</name>
        <dbReference type="ChEBI" id="CHEBI:58349"/>
    </ligand>
</feature>
<feature type="binding site" evidence="1">
    <location>
        <position position="243"/>
    </location>
    <ligand>
        <name>NADP(+)</name>
        <dbReference type="ChEBI" id="CHEBI:58349"/>
    </ligand>
</feature>
<feature type="binding site" evidence="1">
    <location>
        <position position="244"/>
    </location>
    <ligand>
        <name>NADP(+)</name>
        <dbReference type="ChEBI" id="CHEBI:58349"/>
    </ligand>
</feature>
<feature type="binding site" evidence="1">
    <location>
        <position position="245"/>
    </location>
    <ligand>
        <name>NADP(+)</name>
        <dbReference type="ChEBI" id="CHEBI:58349"/>
    </ligand>
</feature>
<feature type="binding site" evidence="1">
    <location>
        <position position="246"/>
    </location>
    <ligand>
        <name>NADP(+)</name>
        <dbReference type="ChEBI" id="CHEBI:58349"/>
    </ligand>
</feature>
<feature type="binding site" evidence="1">
    <location>
        <position position="247"/>
    </location>
    <ligand>
        <name>NADP(+)</name>
        <dbReference type="ChEBI" id="CHEBI:58349"/>
    </ligand>
</feature>
<feature type="binding site" evidence="1">
    <location>
        <position position="248"/>
    </location>
    <ligand>
        <name>NADP(+)</name>
        <dbReference type="ChEBI" id="CHEBI:58349"/>
    </ligand>
</feature>
<feature type="binding site" evidence="1">
    <location>
        <position position="254"/>
    </location>
    <ligand>
        <name>NADP(+)</name>
        <dbReference type="ChEBI" id="CHEBI:58349"/>
    </ligand>
</feature>
<feature type="binding site" evidence="1">
    <location>
        <position position="262"/>
    </location>
    <ligand>
        <name>NADP(+)</name>
        <dbReference type="ChEBI" id="CHEBI:58349"/>
    </ligand>
</feature>
<feature type="binding site" evidence="1">
    <location>
        <position position="264"/>
    </location>
    <ligand>
        <name>NADP(+)</name>
        <dbReference type="ChEBI" id="CHEBI:58349"/>
    </ligand>
</feature>
<feature type="binding site" evidence="1">
    <location>
        <position position="323"/>
    </location>
    <ligand>
        <name>NADP(+)</name>
        <dbReference type="ChEBI" id="CHEBI:58349"/>
    </ligand>
</feature>
<feature type="binding site" evidence="1">
    <location>
        <position position="325"/>
    </location>
    <ligand>
        <name>NADP(+)</name>
        <dbReference type="ChEBI" id="CHEBI:58349"/>
    </ligand>
</feature>
<feature type="binding site" evidence="1">
    <location>
        <position position="329"/>
    </location>
    <ligand>
        <name>NADP(+)</name>
        <dbReference type="ChEBI" id="CHEBI:58349"/>
    </ligand>
</feature>
<feature type="binding site" evidence="1">
    <location>
        <position position="332"/>
    </location>
    <ligand>
        <name>NADP(+)</name>
        <dbReference type="ChEBI" id="CHEBI:58349"/>
    </ligand>
</feature>
<feature type="binding site" evidence="1">
    <location>
        <position position="333"/>
    </location>
    <ligand>
        <name>NADP(+)</name>
        <dbReference type="ChEBI" id="CHEBI:58349"/>
    </ligand>
</feature>
<feature type="modified residue" description="Phosphoserine" evidence="13">
    <location>
        <position position="9"/>
    </location>
</feature>
<feature type="modified residue" description="Phosphoserine" evidence="2">
    <location>
        <position position="14"/>
    </location>
</feature>
<feature type="modified residue" description="Phosphoserine" evidence="7">
    <location>
        <position position="20"/>
    </location>
</feature>
<feature type="modified residue" description="Asymmetric dimethylarginine; alternate" evidence="14">
    <location>
        <position position="28"/>
    </location>
</feature>
<feature type="modified residue" description="Omega-N-methylarginine; alternate" evidence="14">
    <location>
        <position position="28"/>
    </location>
</feature>
<feature type="modified residue" description="Phosphoserine" evidence="2">
    <location>
        <position position="31"/>
    </location>
</feature>
<feature type="modified residue" description="Phosphoserine" evidence="7">
    <location>
        <position position="112"/>
    </location>
</feature>
<feature type="modified residue" description="N6-acetyllysine" evidence="2">
    <location>
        <position position="124"/>
    </location>
</feature>
<feature type="mutagenesis site" description="No detectable phenotype." evidence="3">
    <original>Y</original>
    <variation>F</variation>
    <location>
        <position position="90"/>
    </location>
</feature>
<feature type="sequence conflict" description="In Ref. 2; AAB37263." evidence="11" ref="2">
    <original>I</original>
    <variation>L</variation>
    <location>
        <position position="64"/>
    </location>
</feature>
<feature type="sequence conflict" description="In Ref. 3; AAA75174." evidence="11" ref="3">
    <original>LG</original>
    <variation>FR</variation>
    <location>
        <begin position="99"/>
        <end position="100"/>
    </location>
</feature>
<feature type="sequence conflict" description="In Ref. 2; AAB37263." evidence="11" ref="2">
    <original>A</original>
    <variation>G</variation>
    <location>
        <position position="202"/>
    </location>
</feature>
<feature type="sequence conflict" description="In Ref. 3; AAA75174." evidence="11" ref="3">
    <original>S</original>
    <variation>L</variation>
    <location>
        <position position="266"/>
    </location>
</feature>
<sequence length="367" mass="41021">MYPESTTGSPARLSLRQTGSPGMIYSTRYGSPKRQLQFYRNLGKSGLRVSCLGLGTWVTFGGQITDEMAEHLMTLAYDNGINLFDTAEVYAAGKAEVVLGNIIKKKGWRRSSLVITTKIFWGGKAETERGLSRKHIIEGLKASLERLQLEYVDVVFANRPDPNTPMEETVRAMTHVINQGMAMYWGTSRWSSMEIMEAYSVARQFNLIPPICEQAEYHMFQREKVEVQLPELFHKIGVGAMTWSPLACGIVSGKYDSGIPPYSRASLKGYQWLKDKILSEEGRRQQAKLKELQAIAERLGCTLPQLAIAWCLRNEGVSSVLLGASNAEQLMENIGAIQVLPKLSSSIVHEIDSILGNKPYSKKDYRS</sequence>
<evidence type="ECO:0000250" key="1">
    <source>
        <dbReference type="UniProtKB" id="P62483"/>
    </source>
</evidence>
<evidence type="ECO:0000250" key="2">
    <source>
        <dbReference type="UniProtKB" id="Q13303"/>
    </source>
</evidence>
<evidence type="ECO:0000269" key="3">
    <source>
    </source>
</evidence>
<evidence type="ECO:0000269" key="4">
    <source>
    </source>
</evidence>
<evidence type="ECO:0000269" key="5">
    <source>
    </source>
</evidence>
<evidence type="ECO:0000269" key="6">
    <source>
    </source>
</evidence>
<evidence type="ECO:0000269" key="7">
    <source>
    </source>
</evidence>
<evidence type="ECO:0000269" key="8">
    <source>
    </source>
</evidence>
<evidence type="ECO:0000269" key="9">
    <source>
    </source>
</evidence>
<evidence type="ECO:0000269" key="10">
    <source>
    </source>
</evidence>
<evidence type="ECO:0000305" key="11"/>
<evidence type="ECO:0000312" key="12">
    <source>
        <dbReference type="MGI" id="MGI:109239"/>
    </source>
</evidence>
<evidence type="ECO:0007744" key="13">
    <source>
    </source>
</evidence>
<evidence type="ECO:0007744" key="14">
    <source>
    </source>
</evidence>
<proteinExistence type="evidence at protein level"/>
<organism>
    <name type="scientific">Mus musculus</name>
    <name type="common">Mouse</name>
    <dbReference type="NCBI Taxonomy" id="10090"/>
    <lineage>
        <taxon>Eukaryota</taxon>
        <taxon>Metazoa</taxon>
        <taxon>Chordata</taxon>
        <taxon>Craniata</taxon>
        <taxon>Vertebrata</taxon>
        <taxon>Euteleostomi</taxon>
        <taxon>Mammalia</taxon>
        <taxon>Eutheria</taxon>
        <taxon>Euarchontoglires</taxon>
        <taxon>Glires</taxon>
        <taxon>Rodentia</taxon>
        <taxon>Myomorpha</taxon>
        <taxon>Muroidea</taxon>
        <taxon>Muridae</taxon>
        <taxon>Murinae</taxon>
        <taxon>Mus</taxon>
        <taxon>Mus</taxon>
    </lineage>
</organism>
<dbReference type="EC" id="1.1.1.-" evidence="1"/>
<dbReference type="EMBL" id="L48983">
    <property type="protein sequence ID" value="AAB00829.1"/>
    <property type="molecule type" value="mRNA"/>
</dbReference>
<dbReference type="EMBL" id="U65592">
    <property type="protein sequence ID" value="AAB37263.1"/>
    <property type="molecule type" value="mRNA"/>
</dbReference>
<dbReference type="EMBL" id="U31908">
    <property type="protein sequence ID" value="AAA75174.1"/>
    <property type="molecule type" value="mRNA"/>
</dbReference>
<dbReference type="EMBL" id="BC039178">
    <property type="protein sequence ID" value="AAH39178.1"/>
    <property type="molecule type" value="mRNA"/>
</dbReference>
<dbReference type="CCDS" id="CCDS19000.1"/>
<dbReference type="RefSeq" id="NP_001239585.1">
    <property type="nucleotide sequence ID" value="NM_001252656.3"/>
</dbReference>
<dbReference type="RefSeq" id="NP_001342101.1">
    <property type="nucleotide sequence ID" value="NM_001355172.2"/>
</dbReference>
<dbReference type="RefSeq" id="NP_001408146.1">
    <property type="nucleotide sequence ID" value="NM_001421217.1"/>
</dbReference>
<dbReference type="RefSeq" id="NP_034728.2">
    <property type="nucleotide sequence ID" value="NM_010598.3"/>
</dbReference>
<dbReference type="RefSeq" id="XP_017175485.1">
    <property type="nucleotide sequence ID" value="XM_017319996.1"/>
</dbReference>
<dbReference type="RefSeq" id="XP_030109127.1">
    <property type="nucleotide sequence ID" value="XM_030253267.1"/>
</dbReference>
<dbReference type="SMR" id="P62482"/>
<dbReference type="BioGRID" id="200884">
    <property type="interactions" value="16"/>
</dbReference>
<dbReference type="FunCoup" id="P62482">
    <property type="interactions" value="387"/>
</dbReference>
<dbReference type="IntAct" id="P62482">
    <property type="interactions" value="8"/>
</dbReference>
<dbReference type="MINT" id="P62482"/>
<dbReference type="STRING" id="10090.ENSMUSP00000125058"/>
<dbReference type="GlyGen" id="P62482">
    <property type="glycosylation" value="2 sites, 1 O-linked glycan (2 sites)"/>
</dbReference>
<dbReference type="iPTMnet" id="P62482"/>
<dbReference type="MetOSite" id="P62482"/>
<dbReference type="PhosphoSitePlus" id="P62482"/>
<dbReference type="SwissPalm" id="P62482"/>
<dbReference type="jPOST" id="P62482"/>
<dbReference type="PaxDb" id="10090-ENSMUSP00000125058"/>
<dbReference type="PeptideAtlas" id="P62482"/>
<dbReference type="ProteomicsDB" id="269182"/>
<dbReference type="Pumba" id="P62482"/>
<dbReference type="ABCD" id="P62482">
    <property type="antibodies" value="3 sequenced antibodies"/>
</dbReference>
<dbReference type="Antibodypedia" id="4538">
    <property type="antibodies" value="167 antibodies from 26 providers"/>
</dbReference>
<dbReference type="DNASU" id="16498"/>
<dbReference type="Ensembl" id="ENSMUST00000105648.10">
    <property type="protein sequence ID" value="ENSMUSP00000101273.3"/>
    <property type="gene ID" value="ENSMUSG00000028931.13"/>
</dbReference>
<dbReference type="Ensembl" id="ENSMUST00000160884.9">
    <property type="protein sequence ID" value="ENSMUSP00000125058.2"/>
    <property type="gene ID" value="ENSMUSG00000028931.13"/>
</dbReference>
<dbReference type="GeneID" id="16498"/>
<dbReference type="KEGG" id="mmu:16498"/>
<dbReference type="UCSC" id="uc008wal.2">
    <property type="organism name" value="mouse"/>
</dbReference>
<dbReference type="AGR" id="MGI:109239"/>
<dbReference type="CTD" id="8514"/>
<dbReference type="MGI" id="MGI:109239">
    <property type="gene designation" value="Kcnab2"/>
</dbReference>
<dbReference type="VEuPathDB" id="HostDB:ENSMUSG00000028931"/>
<dbReference type="eggNOG" id="KOG1575">
    <property type="taxonomic scope" value="Eukaryota"/>
</dbReference>
<dbReference type="GeneTree" id="ENSGT00940000157867"/>
<dbReference type="InParanoid" id="P62482"/>
<dbReference type="OMA" id="YLPWSPL"/>
<dbReference type="PhylomeDB" id="P62482"/>
<dbReference type="TreeFam" id="TF324563"/>
<dbReference type="Reactome" id="R-MMU-1296072">
    <property type="pathway name" value="Voltage gated Potassium channels"/>
</dbReference>
<dbReference type="Reactome" id="R-MMU-6798695">
    <property type="pathway name" value="Neutrophil degranulation"/>
</dbReference>
<dbReference type="BioGRID-ORCS" id="16498">
    <property type="hits" value="2 hits in 77 CRISPR screens"/>
</dbReference>
<dbReference type="CD-CODE" id="CE726F99">
    <property type="entry name" value="Postsynaptic density"/>
</dbReference>
<dbReference type="ChiTaRS" id="Kcnab2">
    <property type="organism name" value="mouse"/>
</dbReference>
<dbReference type="PRO" id="PR:P62482"/>
<dbReference type="Proteomes" id="UP000000589">
    <property type="component" value="Chromosome 4"/>
</dbReference>
<dbReference type="RNAct" id="P62482">
    <property type="molecule type" value="protein"/>
</dbReference>
<dbReference type="Bgee" id="ENSMUSG00000028931">
    <property type="expression patterns" value="Expressed in dentate gyrus of hippocampal formation granule cell and 178 other cell types or tissues"/>
</dbReference>
<dbReference type="ExpressionAtlas" id="P62482">
    <property type="expression patterns" value="baseline and differential"/>
</dbReference>
<dbReference type="GO" id="GO:0030424">
    <property type="term" value="C:axon"/>
    <property type="evidence" value="ECO:0000314"/>
    <property type="project" value="MGI"/>
</dbReference>
<dbReference type="GO" id="GO:0043194">
    <property type="term" value="C:axon initial segment"/>
    <property type="evidence" value="ECO:0000314"/>
    <property type="project" value="MGI"/>
</dbReference>
<dbReference type="GO" id="GO:0043679">
    <property type="term" value="C:axon terminus"/>
    <property type="evidence" value="ECO:0000314"/>
    <property type="project" value="UniProtKB"/>
</dbReference>
<dbReference type="GO" id="GO:0009898">
    <property type="term" value="C:cytoplasmic side of plasma membrane"/>
    <property type="evidence" value="ECO:0000250"/>
    <property type="project" value="UniProtKB"/>
</dbReference>
<dbReference type="GO" id="GO:0005856">
    <property type="term" value="C:cytoskeleton"/>
    <property type="evidence" value="ECO:0007669"/>
    <property type="project" value="UniProtKB-SubCell"/>
</dbReference>
<dbReference type="GO" id="GO:0005829">
    <property type="term" value="C:cytosol"/>
    <property type="evidence" value="ECO:0000250"/>
    <property type="project" value="UniProtKB"/>
</dbReference>
<dbReference type="GO" id="GO:0044224">
    <property type="term" value="C:juxtaparanode region of axon"/>
    <property type="evidence" value="ECO:0000314"/>
    <property type="project" value="UniProtKB"/>
</dbReference>
<dbReference type="GO" id="GO:0016020">
    <property type="term" value="C:membrane"/>
    <property type="evidence" value="ECO:0000250"/>
    <property type="project" value="UniProtKB"/>
</dbReference>
<dbReference type="GO" id="GO:1990031">
    <property type="term" value="C:pinceau fiber"/>
    <property type="evidence" value="ECO:0000250"/>
    <property type="project" value="UniProtKB"/>
</dbReference>
<dbReference type="GO" id="GO:0014069">
    <property type="term" value="C:postsynaptic density"/>
    <property type="evidence" value="ECO:0000314"/>
    <property type="project" value="MGI"/>
</dbReference>
<dbReference type="GO" id="GO:0034705">
    <property type="term" value="C:potassium channel complex"/>
    <property type="evidence" value="ECO:0000250"/>
    <property type="project" value="UniProtKB"/>
</dbReference>
<dbReference type="GO" id="GO:0004033">
    <property type="term" value="F:aldo-keto reductase (NADPH) activity"/>
    <property type="evidence" value="ECO:0000250"/>
    <property type="project" value="UniProtKB"/>
</dbReference>
<dbReference type="GO" id="GO:1990002">
    <property type="term" value="F:methylglyoxal reductase (NADPH) (acetol producing) activity"/>
    <property type="evidence" value="ECO:0007669"/>
    <property type="project" value="RHEA"/>
</dbReference>
<dbReference type="GO" id="GO:0015459">
    <property type="term" value="F:potassium channel regulator activity"/>
    <property type="evidence" value="ECO:0000250"/>
    <property type="project" value="UniProtKB"/>
</dbReference>
<dbReference type="GO" id="GO:0005249">
    <property type="term" value="F:voltage-gated potassium channel activity"/>
    <property type="evidence" value="ECO:0007669"/>
    <property type="project" value="InterPro"/>
</dbReference>
<dbReference type="GO" id="GO:0002244">
    <property type="term" value="P:hematopoietic progenitor cell differentiation"/>
    <property type="evidence" value="ECO:0000316"/>
    <property type="project" value="MGI"/>
</dbReference>
<dbReference type="GO" id="GO:0050905">
    <property type="term" value="P:neuromuscular process"/>
    <property type="evidence" value="ECO:0000315"/>
    <property type="project" value="UniProtKB"/>
</dbReference>
<dbReference type="GO" id="GO:1901379">
    <property type="term" value="P:regulation of potassium ion transmembrane transport"/>
    <property type="evidence" value="ECO:0000250"/>
    <property type="project" value="UniProtKB"/>
</dbReference>
<dbReference type="GO" id="GO:2000008">
    <property type="term" value="P:regulation of protein localization to cell surface"/>
    <property type="evidence" value="ECO:0000250"/>
    <property type="project" value="UniProtKB"/>
</dbReference>
<dbReference type="CDD" id="cd19141">
    <property type="entry name" value="Aldo_ket_red_shaker"/>
    <property type="match status" value="1"/>
</dbReference>
<dbReference type="FunFam" id="3.20.20.100:FF:000001">
    <property type="entry name" value="voltage-gated potassium channel subunit beta-2 isoform X2"/>
    <property type="match status" value="1"/>
</dbReference>
<dbReference type="Gene3D" id="3.20.20.100">
    <property type="entry name" value="NADP-dependent oxidoreductase domain"/>
    <property type="match status" value="1"/>
</dbReference>
<dbReference type="InterPro" id="IPR005983">
    <property type="entry name" value="K_chnl_volt-dep_bsu_KCNAB"/>
</dbReference>
<dbReference type="InterPro" id="IPR005399">
    <property type="entry name" value="K_chnl_volt-dep_bsu_KCNAB-rel"/>
</dbReference>
<dbReference type="InterPro" id="IPR005401">
    <property type="entry name" value="K_chnl_volt-dep_bsu_KCNAB2"/>
</dbReference>
<dbReference type="InterPro" id="IPR023210">
    <property type="entry name" value="NADP_OxRdtase_dom"/>
</dbReference>
<dbReference type="InterPro" id="IPR036812">
    <property type="entry name" value="NADP_OxRdtase_dom_sf"/>
</dbReference>
<dbReference type="NCBIfam" id="TIGR01293">
    <property type="entry name" value="Kv_beta"/>
    <property type="match status" value="1"/>
</dbReference>
<dbReference type="PANTHER" id="PTHR43150">
    <property type="entry name" value="HYPERKINETIC, ISOFORM M"/>
    <property type="match status" value="1"/>
</dbReference>
<dbReference type="PANTHER" id="PTHR43150:SF1">
    <property type="entry name" value="VOLTAGE-GATED POTASSIUM CHANNEL SUBUNIT BETA-2"/>
    <property type="match status" value="1"/>
</dbReference>
<dbReference type="Pfam" id="PF00248">
    <property type="entry name" value="Aldo_ket_red"/>
    <property type="match status" value="1"/>
</dbReference>
<dbReference type="PRINTS" id="PR01579">
    <property type="entry name" value="KCNAB2CHANEL"/>
</dbReference>
<dbReference type="PRINTS" id="PR01577">
    <property type="entry name" value="KCNABCHANNEL"/>
</dbReference>
<dbReference type="SUPFAM" id="SSF51430">
    <property type="entry name" value="NAD(P)-linked oxidoreductase"/>
    <property type="match status" value="1"/>
</dbReference>
<comment type="function">
    <text evidence="1 3 6 9">Regulatory subunit of the voltage-gated potassium (Kv) Shaker channel family. Shaker channels are composed of pore-forming and potassium-conducting alpha subunits and of regulatory beta subunits (PubMed:8576199). The beta-2/KCNAB2 subunit promotes potassium channel closure via a mechanism that does not involve physical obstruction of the channel pore (PubMed:8576199). Promotes the inactivation of Kv1.4/KCNA4 and Kv1.5/KCNA5 alpha subunit-containing channels (PubMed:8576199). Displays nicotinamide adenine dinucleotide phosphate (NADPH)-dependent aldoketoreductase activity by catalyzing the NADPH-dependent reduction of a wide range of aldehyde and ketone substrates (By similarity). Substrate specificity includes methylglyoxal, 9,10-phenanthrenequinone, prostaglandin J2, 4-nitrobenzaldehyde, 4-nitroacetophenone and 4-oxo-trans-2-nonenal (in vitro, no physiological substrate identified yet) (By similarity). The binding of oxidized and reduced nucleotide cofactors alters Kv channel gating and may contribute to dynamic fine tuning of cell excitability (By similarity). Contributes to the regulation of nerve signaling, and prevents neuronal hyperexcitability (PubMed:11825900, PubMed:21209188).</text>
</comment>
<comment type="catalytic activity">
    <reaction evidence="1">
        <text>hydroxyacetone + NADP(+) = methylglyoxal + NADPH + H(+)</text>
        <dbReference type="Rhea" id="RHEA:27986"/>
        <dbReference type="ChEBI" id="CHEBI:15378"/>
        <dbReference type="ChEBI" id="CHEBI:17158"/>
        <dbReference type="ChEBI" id="CHEBI:27957"/>
        <dbReference type="ChEBI" id="CHEBI:57783"/>
        <dbReference type="ChEBI" id="CHEBI:58349"/>
    </reaction>
    <physiologicalReaction direction="right-to-left" evidence="1">
        <dbReference type="Rhea" id="RHEA:27988"/>
    </physiologicalReaction>
</comment>
<comment type="catalytic activity">
    <reaction evidence="1">
        <text>(E)-4-oxonon-2-en-1-ol + NADP(+) = (E)-4-oxonon-2-enal + NADPH + H(+)</text>
        <dbReference type="Rhea" id="RHEA:58432"/>
        <dbReference type="ChEBI" id="CHEBI:15378"/>
        <dbReference type="ChEBI" id="CHEBI:57783"/>
        <dbReference type="ChEBI" id="CHEBI:58349"/>
        <dbReference type="ChEBI" id="CHEBI:58972"/>
        <dbReference type="ChEBI" id="CHEBI:142624"/>
    </reaction>
    <physiologicalReaction direction="right-to-left" evidence="1">
        <dbReference type="Rhea" id="RHEA:58434"/>
    </physiologicalReaction>
</comment>
<comment type="subunit">
    <text evidence="1 9">Homotetramer. Interaction with tetrameric potassium channel alpha subunits gives rise to a heterooctamer (By similarity). Identified in potassium channel complexes containing KCNA1, KCNA2, KCNA4, KCNA5, KCNA6, KCNAB1, KCNAB2 and KCND3 (PubMed:8576199). Interacts (in unphosphorylated form) with MAPRE1. Forms a ternary complex with SQSTM1 and PRKCZ (By similarity).</text>
</comment>
<comment type="subcellular location">
    <subcellularLocation>
        <location evidence="1">Cytoplasm</location>
    </subcellularLocation>
    <subcellularLocation>
        <location evidence="7 9">Membrane</location>
        <topology evidence="11">Peripheral membrane protein</topology>
        <orientation evidence="11">Cytoplasmic side</orientation>
    </subcellularLocation>
    <subcellularLocation>
        <location evidence="1">Cell membrane</location>
        <topology evidence="11">Peripheral membrane protein</topology>
        <orientation evidence="11">Cytoplasmic side</orientation>
    </subcellularLocation>
    <subcellularLocation>
        <location evidence="3">Cell projection</location>
        <location evidence="3">Axon</location>
    </subcellularLocation>
    <subcellularLocation>
        <location evidence="7">Synapse</location>
        <location evidence="7">Synaptosome</location>
    </subcellularLocation>
    <subcellularLocation>
        <location evidence="1">Cytoplasm</location>
        <location evidence="1">Cytoskeleton</location>
    </subcellularLocation>
    <text evidence="1">Recruited to the cytoplasmic side of the cell membrane via its interaction with pore-forming potassium channel alpha subunits. Associates with microtubules when unphosphorylated.</text>
</comment>
<comment type="tissue specificity">
    <text evidence="3 5 7 8 10">Detected in brain (PubMed:21357749). Detected at basket cell terminals in cerebellum and in the juxtaparanodal region of nodes of Ranvier (at protein level) (PubMed:11825900, PubMed:26269648). Strongest expression in brain and eye. Highest levels in brain detected in brainstem and diencephalon. Strong expression also detected in lung and heart. Moderate expression in kidney, T-lymphocytes and skeletal muscle.</text>
</comment>
<comment type="developmental stage">
    <text evidence="5">Not detected prior to birth, low levels of expression detected from postnatal days 1 to 7. Expression reaches adult levels by postnatal day 21.</text>
</comment>
<comment type="domain">
    <text evidence="2">In contrast to KCNAB1, the shorter N-terminal domain of KCNAB2 cannot mediate closure of delayed rectifier potassium channels by physically obstructing the pore.</text>
</comment>
<comment type="PTM">
    <text evidence="1">Phosphorylated by PRKCZ; may be regulated by incorporation in a complex composed of PRKCZ and SQSTM1.</text>
</comment>
<comment type="disruption phenotype">
    <text evidence="3 4 6">Mutant mice are born at the expected Mendelian rate and are fertile, but exhibit occasional seizures and have a median lifespan of 255 days, which is much shorter than the 400 days typically observed for heterozygotes (PubMed:11825900). The reduction in lifespan depends strongly on the genetic background; median survival is 138 days for B6 mice, 255 days for B6/129 mice and over 400 days for 129/SvEv mice (PubMed:15720404). Mice exhibit whole body tremors after swimming in cold water, which is not observed in wild-type (PubMed:11825900). The whole body tremors observed after swimming in cold water differ between mouse strains; the observed differences are largely due to differences in the decrease of the core body temperature (PubMed:15720404). Mice lacking both KCNAB1 and KCNAB2 have a median survival of 114 days instead of the 255 days observed for mice lacking only KCNAB2, but show no aggravation of the whole body tremors observed after swimming in cold water (PubMed:15720404). Mice lacking KCNAB2 show subtle deficits in associative learning and aberrant excitability of neurons from the lateral amygdala (PubMed:21209188).</text>
</comment>
<comment type="similarity">
    <text evidence="11">Belongs to the shaker potassium channel beta subunit family.</text>
</comment>
<keyword id="KW-0007">Acetylation</keyword>
<keyword id="KW-1003">Cell membrane</keyword>
<keyword id="KW-0966">Cell projection</keyword>
<keyword id="KW-0963">Cytoplasm</keyword>
<keyword id="KW-0206">Cytoskeleton</keyword>
<keyword id="KW-0406">Ion transport</keyword>
<keyword id="KW-0472">Membrane</keyword>
<keyword id="KW-0488">Methylation</keyword>
<keyword id="KW-0521">NADP</keyword>
<keyword id="KW-0560">Oxidoreductase</keyword>
<keyword id="KW-0597">Phosphoprotein</keyword>
<keyword id="KW-0630">Potassium</keyword>
<keyword id="KW-0633">Potassium transport</keyword>
<keyword id="KW-1185">Reference proteome</keyword>
<keyword id="KW-0770">Synapse</keyword>
<keyword id="KW-0771">Synaptosome</keyword>
<keyword id="KW-0813">Transport</keyword>
<gene>
    <name evidence="12" type="primary">Kcnab2</name>
    <name type="synonym">Ckbeta2</name>
    <name type="synonym">I2rf5</name>
    <name type="synonym">Kcnb3</name>
</gene>
<reference key="1">
    <citation type="journal article" date="1996" name="J. Biol. Chem.">
        <title>Functional differences in Kv1.5 currents expressed in mammalian cell lines are due to the presence of endogenous Kv beta 2.1 subunits.</title>
        <authorList>
            <person name="Uebele V.N."/>
            <person name="England S.K."/>
            <person name="Chaudhary A."/>
            <person name="Tamkun M.M."/>
            <person name="Snyders D.J."/>
        </authorList>
    </citation>
    <scope>NUCLEOTIDE SEQUENCE [MRNA]</scope>
    <scope>FUNCTION</scope>
    <scope>INTERACTION WITH KCNA5</scope>
    <scope>SUBCELLULAR LOCATION</scope>
    <source>
        <tissue>Fibroblast</tissue>
    </source>
</reference>
<reference key="2">
    <citation type="journal article" date="1996" name="J. Biol. Chem.">
        <title>A new K+ channel beta subunit to specifically enhance Kv2.2 (CDRK) expression.</title>
        <authorList>
            <person name="Fink M."/>
            <person name="Duprat F."/>
            <person name="Lesage F."/>
            <person name="Heurteaux C."/>
            <person name="Romey G."/>
            <person name="Barhanin J."/>
            <person name="Lazdunski M."/>
        </authorList>
    </citation>
    <scope>NUCLEOTIDE SEQUENCE [MRNA]</scope>
    <scope>TISSUE SPECIFICITY</scope>
    <source>
        <tissue>Brain cortex</tissue>
    </source>
</reference>
<reference key="3">
    <citation type="journal article" date="1992" name="J. Neurosci. Res.">
        <title>Characterization of a novel mRNA expressed by neurons in mature brain.</title>
        <authorList>
            <person name="Cohen J.A."/>
            <person name="Arai M."/>
            <person name="Prak E.L."/>
            <person name="Brooks S.A."/>
            <person name="Young L.H."/>
            <person name="Prystowsky M.B."/>
        </authorList>
    </citation>
    <scope>NUCLEOTIDE SEQUENCE [MRNA]</scope>
    <scope>TISSUE SPECIFICITY</scope>
    <scope>DEVELOPMENTAL STAGE</scope>
    <source>
        <strain>C57BL/6N</strain>
        <tissue>Brain</tissue>
        <tissue>T-cell</tissue>
    </source>
</reference>
<reference key="4">
    <citation type="journal article" date="2004" name="Genome Res.">
        <title>The status, quality, and expansion of the NIH full-length cDNA project: the Mammalian Gene Collection (MGC).</title>
        <authorList>
            <consortium name="The MGC Project Team"/>
        </authorList>
    </citation>
    <scope>NUCLEOTIDE SEQUENCE [LARGE SCALE MRNA]</scope>
    <source>
        <tissue>Eye</tissue>
    </source>
</reference>
<reference key="5">
    <citation type="journal article" date="2002" name="J. Biol. Chem.">
        <title>Genetic analysis of the mammalian K+ channel beta subunit Kvbeta 2 (Kcnab2).</title>
        <authorList>
            <person name="McCormack K."/>
            <person name="Connor J.X."/>
            <person name="Zhou L."/>
            <person name="Ho L.L."/>
            <person name="Ganetzky B."/>
            <person name="Chiu S.Y."/>
            <person name="Messing A."/>
        </authorList>
    </citation>
    <scope>DISRUPTION PHENOTYPE</scope>
    <scope>SUBCELLULAR LOCATION</scope>
    <scope>TISSUE SPECIFICITY</scope>
    <scope>MUTAGENESIS OF TYR-90</scope>
</reference>
<reference key="6">
    <citation type="journal article" date="2005" name="Genes Brain Behav.">
        <title>Genetic modifiers of the Kv beta2-null phenotype in mice.</title>
        <authorList>
            <person name="Connor J.X."/>
            <person name="McCormack K."/>
            <person name="Pletsch A."/>
            <person name="Gaeta S."/>
            <person name="Ganetzky B."/>
            <person name="Chiu S.Y."/>
            <person name="Messing A."/>
        </authorList>
    </citation>
    <scope>DISRUPTION PHENOTYPE</scope>
</reference>
<reference key="7">
    <citation type="journal article" date="2010" name="Cell">
        <title>A tissue-specific atlas of mouse protein phosphorylation and expression.</title>
        <authorList>
            <person name="Huttlin E.L."/>
            <person name="Jedrychowski M.P."/>
            <person name="Elias J.E."/>
            <person name="Goswami T."/>
            <person name="Rad R."/>
            <person name="Beausoleil S.A."/>
            <person name="Villen J."/>
            <person name="Haas W."/>
            <person name="Sowa M.E."/>
            <person name="Gygi S.P."/>
        </authorList>
    </citation>
    <scope>PHOSPHORYLATION [LARGE SCALE ANALYSIS] AT SER-9</scope>
    <scope>IDENTIFICATION BY MASS SPECTROMETRY [LARGE SCALE ANALYSIS]</scope>
    <source>
        <tissue>Brain</tissue>
        <tissue>Pancreas</tissue>
        <tissue>Spleen</tissue>
    </source>
</reference>
<reference key="8">
    <citation type="journal article" date="2011" name="J. Cell Biol.">
        <title>Cdk-mediated phosphorylation of the Kvbeta2 auxiliary subunit regulates Kv1 channel axonal targeting.</title>
        <authorList>
            <person name="Vacher H."/>
            <person name="Yang J.W."/>
            <person name="Cerda O."/>
            <person name="Autillo-Touati A."/>
            <person name="Dargent B."/>
            <person name="Trimmer J.S."/>
        </authorList>
    </citation>
    <scope>IDENTIFICATION BY MASS SPECTROMETRY</scope>
    <scope>PHOSPHORYLATION AT SER-20 AND SER-112</scope>
    <scope>SUBCELLULAR LOCATION</scope>
    <scope>TISSUE SPECIFICITY</scope>
</reference>
<reference key="9">
    <citation type="journal article" date="2011" name="J. Neurosci.">
        <title>Deletion of the mouse homolog of KCNAB2, a gene linked to monosomy 1p36, results in associative memory impairments and amygdala hyperexcitability.</title>
        <authorList>
            <person name="Perkowski J.J."/>
            <person name="Murphy G.G."/>
        </authorList>
    </citation>
    <scope>DISRUPTION PHENOTYPE</scope>
    <scope>FUNCTION</scope>
</reference>
<reference key="10">
    <citation type="journal article" date="2014" name="Mol. Cell. Proteomics">
        <title>Immunoaffinity enrichment and mass spectrometry analysis of protein methylation.</title>
        <authorList>
            <person name="Guo A."/>
            <person name="Gu H."/>
            <person name="Zhou J."/>
            <person name="Mulhern D."/>
            <person name="Wang Y."/>
            <person name="Lee K.A."/>
            <person name="Yang V."/>
            <person name="Aguiar M."/>
            <person name="Kornhauser J."/>
            <person name="Jia X."/>
            <person name="Ren J."/>
            <person name="Beausoleil S.A."/>
            <person name="Silva J.C."/>
            <person name="Vemulapalli V."/>
            <person name="Bedford M.T."/>
            <person name="Comb M.J."/>
        </authorList>
    </citation>
    <scope>METHYLATION [LARGE SCALE ANALYSIS] AT ARG-28</scope>
    <scope>IDENTIFICATION BY MASS SPECTROMETRY [LARGE SCALE ANALYSIS]</scope>
    <source>
        <tissue>Brain</tissue>
        <tissue>Embryo</tissue>
    </source>
</reference>
<reference key="11">
    <citation type="journal article" date="2015" name="J. Neurosci.">
        <title>Selective Loss of Presynaptic Potassium Channel Clusters at the Cerebellar Basket Cell Terminal Pinceau in Adam11 Mutants Reveals Their Role in Ephaptic Control of Purkinje Cell Firing.</title>
        <authorList>
            <person name="Kole M.J."/>
            <person name="Qian J."/>
            <person name="Waase M.P."/>
            <person name="Klassen T.L."/>
            <person name="Chen T.T."/>
            <person name="Augustine G.J."/>
            <person name="Noebels J.L."/>
        </authorList>
    </citation>
    <scope>TISSUE SPECIFICITY</scope>
</reference>